<gene>
    <name type="ORF">GA14252</name>
</gene>
<sequence length="608" mass="68497">MLPKLKISAFLLKRLERVKQQSSGCLYGVFYGDGTLLLLSFNLSNVGQLNYEQIQHRFPAELDLCGLVKFGDCTDAEAHLNEVIKSVDITDNPILLKCELGTLVGMRASFFVHGKLEEVPYDVMDSEQLYNDFCFTRLQCGFYLQTAATPECVAKEMHVLRKRVADGNLVFKVPHTNIYIHSCGPMDNKLRGESRINDLVQAIPIPSGKENVVADKKKSKTAAQTQLAKHFGATGCEYDLINIDVMRIRTRDLLARDSPPHPALSIAVTTEEQTRAQVPLEIEAMAMLCKNTKLQRLYDVLIESICRALRLFEQSLNEHLAESEGGSLAVPRSHHFYPQGFGHFLSCAYLEGLGDDEPIMQERRKRLHRQFSLPVTRPYFRRANQCHFQGEVDDAPWTPLLNTHVGVRPSAVTDGKEYLVNGNYHYYHYLQQQVQDKGWGCAYRSLQTICSWFVLQGYTNAPIPTHLEVQKYLHKINDKPSSFVGSSQWIGSTEISMCLQGFLKVDSKILHVSSGAELPTIASELAMHFQTQGTPVMIGGGVLAHTIIGVDYCVQSGEVKFLILDPHYTGADELATIQIKGWCGWKSMDFWSKGSYYNLCMPQRPILY</sequence>
<protein>
    <recommendedName>
        <fullName evidence="2">Probable Ufm1-specific protease 2</fullName>
        <shortName evidence="2">UfSP2</shortName>
        <ecNumber evidence="1 2">3.4.22.-</ecNumber>
    </recommendedName>
</protein>
<dbReference type="EC" id="3.4.22.-" evidence="1 2"/>
<dbReference type="EMBL" id="CH379069">
    <property type="protein sequence ID" value="EAL30643.1"/>
    <property type="molecule type" value="Genomic_DNA"/>
</dbReference>
<dbReference type="SMR" id="Q2M1D1"/>
<dbReference type="FunCoup" id="Q2M1D1">
    <property type="interactions" value="541"/>
</dbReference>
<dbReference type="STRING" id="46245.Q2M1D1"/>
<dbReference type="MEROPS" id="C78.A01"/>
<dbReference type="EnsemblMetazoa" id="FBtr0276352">
    <property type="protein sequence ID" value="FBpp0274790"/>
    <property type="gene ID" value="FBgn0074281"/>
</dbReference>
<dbReference type="KEGG" id="dpo:4812951"/>
<dbReference type="CTD" id="55325"/>
<dbReference type="eggNOG" id="KOG2433">
    <property type="taxonomic scope" value="Eukaryota"/>
</dbReference>
<dbReference type="HOGENOM" id="CLU_021066_1_0_1"/>
<dbReference type="InParanoid" id="Q2M1D1"/>
<dbReference type="OMA" id="CGLVKFG"/>
<dbReference type="PhylomeDB" id="Q2M1D1"/>
<dbReference type="Proteomes" id="UP000001819">
    <property type="component" value="Chromosome X"/>
</dbReference>
<dbReference type="Bgee" id="FBgn0074281">
    <property type="expression patterns" value="Expressed in female reproductive system and 3 other cell types or tissues"/>
</dbReference>
<dbReference type="GO" id="GO:0005783">
    <property type="term" value="C:endoplasmic reticulum"/>
    <property type="evidence" value="ECO:0007669"/>
    <property type="project" value="TreeGrafter"/>
</dbReference>
<dbReference type="GO" id="GO:0005634">
    <property type="term" value="C:nucleus"/>
    <property type="evidence" value="ECO:0007669"/>
    <property type="project" value="TreeGrafter"/>
</dbReference>
<dbReference type="GO" id="GO:0071567">
    <property type="term" value="F:deUFMylase activity"/>
    <property type="evidence" value="ECO:0000250"/>
    <property type="project" value="UniProtKB"/>
</dbReference>
<dbReference type="GO" id="GO:0006508">
    <property type="term" value="P:proteolysis"/>
    <property type="evidence" value="ECO:0000250"/>
    <property type="project" value="UniProtKB"/>
</dbReference>
<dbReference type="FunFam" id="3.90.70.130:FF:000001">
    <property type="entry name" value="Probable Ufm1-specific protease 2"/>
    <property type="match status" value="1"/>
</dbReference>
<dbReference type="Gene3D" id="3.90.70.130">
    <property type="match status" value="1"/>
</dbReference>
<dbReference type="InterPro" id="IPR038765">
    <property type="entry name" value="Papain-like_cys_pep_sf"/>
</dbReference>
<dbReference type="InterPro" id="IPR012462">
    <property type="entry name" value="UfSP1/2_DUB_cat"/>
</dbReference>
<dbReference type="InterPro" id="IPR049387">
    <property type="entry name" value="UfSP2-like_N"/>
</dbReference>
<dbReference type="PANTHER" id="PTHR48153">
    <property type="entry name" value="UFM1-SPECIFIC PROTEASE 2"/>
    <property type="match status" value="1"/>
</dbReference>
<dbReference type="PANTHER" id="PTHR48153:SF2">
    <property type="entry name" value="UFM1-SPECIFIC PROTEASE 2"/>
    <property type="match status" value="1"/>
</dbReference>
<dbReference type="Pfam" id="PF07910">
    <property type="entry name" value="Peptidase_C78"/>
    <property type="match status" value="1"/>
</dbReference>
<dbReference type="Pfam" id="PF20908">
    <property type="entry name" value="UfSP2_N"/>
    <property type="match status" value="1"/>
</dbReference>
<dbReference type="SUPFAM" id="SSF54001">
    <property type="entry name" value="Cysteine proteinases"/>
    <property type="match status" value="1"/>
</dbReference>
<comment type="function">
    <text evidence="1 2">Thiol protease which recognizes and hydrolyzes the peptide bond at the C-terminal Gly of UFM1, a ubiquitin-like modifier protein bound to a number of target proteins. Does not hydrolyze SUMO1 or ISG15 ubiquitin-like proteins.</text>
</comment>
<comment type="similarity">
    <text evidence="3">Belongs to the peptidase C78 family.</text>
</comment>
<reference key="1">
    <citation type="journal article" date="2005" name="Genome Res.">
        <title>Comparative genome sequencing of Drosophila pseudoobscura: chromosomal, gene, and cis-element evolution.</title>
        <authorList>
            <person name="Richards S."/>
            <person name="Liu Y."/>
            <person name="Bettencourt B.R."/>
            <person name="Hradecky P."/>
            <person name="Letovsky S."/>
            <person name="Nielsen R."/>
            <person name="Thornton K."/>
            <person name="Hubisz M.J."/>
            <person name="Chen R."/>
            <person name="Meisel R.P."/>
            <person name="Couronne O."/>
            <person name="Hua S."/>
            <person name="Smith M.A."/>
            <person name="Zhang P."/>
            <person name="Liu J."/>
            <person name="Bussemaker H.J."/>
            <person name="van Batenburg M.F."/>
            <person name="Howells S.L."/>
            <person name="Scherer S.E."/>
            <person name="Sodergren E."/>
            <person name="Matthews B.B."/>
            <person name="Crosby M.A."/>
            <person name="Schroeder A.J."/>
            <person name="Ortiz-Barrientos D."/>
            <person name="Rives C.M."/>
            <person name="Metzker M.L."/>
            <person name="Muzny D.M."/>
            <person name="Scott G."/>
            <person name="Steffen D."/>
            <person name="Wheeler D.A."/>
            <person name="Worley K.C."/>
            <person name="Havlak P."/>
            <person name="Durbin K.J."/>
            <person name="Egan A."/>
            <person name="Gill R."/>
            <person name="Hume J."/>
            <person name="Morgan M.B."/>
            <person name="Miner G."/>
            <person name="Hamilton C."/>
            <person name="Huang Y."/>
            <person name="Waldron L."/>
            <person name="Verduzco D."/>
            <person name="Clerc-Blankenburg K.P."/>
            <person name="Dubchak I."/>
            <person name="Noor M.A.F."/>
            <person name="Anderson W."/>
            <person name="White K.P."/>
            <person name="Clark A.G."/>
            <person name="Schaeffer S.W."/>
            <person name="Gelbart W.M."/>
            <person name="Weinstock G.M."/>
            <person name="Gibbs R.A."/>
        </authorList>
    </citation>
    <scope>NUCLEOTIDE SEQUENCE [LARGE SCALE GENOMIC DNA]</scope>
    <source>
        <strain>MV2-25 / Tucson 14011-0121.94</strain>
    </source>
</reference>
<name>UFSP2_DROPS</name>
<proteinExistence type="inferred from homology"/>
<feature type="chain" id="PRO_0000280373" description="Probable Ufm1-specific protease 2">
    <location>
        <begin position="1"/>
        <end position="608"/>
    </location>
</feature>
<feature type="active site" evidence="1">
    <location>
        <position position="441"/>
    </location>
</feature>
<feature type="active site" evidence="1">
    <location>
        <position position="565"/>
    </location>
</feature>
<feature type="active site" evidence="1">
    <location>
        <position position="567"/>
    </location>
</feature>
<organism>
    <name type="scientific">Drosophila pseudoobscura pseudoobscura</name>
    <name type="common">Fruit fly</name>
    <dbReference type="NCBI Taxonomy" id="46245"/>
    <lineage>
        <taxon>Eukaryota</taxon>
        <taxon>Metazoa</taxon>
        <taxon>Ecdysozoa</taxon>
        <taxon>Arthropoda</taxon>
        <taxon>Hexapoda</taxon>
        <taxon>Insecta</taxon>
        <taxon>Pterygota</taxon>
        <taxon>Neoptera</taxon>
        <taxon>Endopterygota</taxon>
        <taxon>Diptera</taxon>
        <taxon>Brachycera</taxon>
        <taxon>Muscomorpha</taxon>
        <taxon>Ephydroidea</taxon>
        <taxon>Drosophilidae</taxon>
        <taxon>Drosophila</taxon>
        <taxon>Sophophora</taxon>
    </lineage>
</organism>
<keyword id="KW-0378">Hydrolase</keyword>
<keyword id="KW-0645">Protease</keyword>
<keyword id="KW-1185">Reference proteome</keyword>
<keyword id="KW-0788">Thiol protease</keyword>
<keyword id="KW-0833">Ubl conjugation pathway</keyword>
<accession>Q2M1D1</accession>
<evidence type="ECO:0000250" key="1">
    <source>
        <dbReference type="UniProtKB" id="Q99K23"/>
    </source>
</evidence>
<evidence type="ECO:0000250" key="2">
    <source>
        <dbReference type="UniProtKB" id="Q9NUQ7"/>
    </source>
</evidence>
<evidence type="ECO:0000305" key="3"/>